<proteinExistence type="inferred from homology"/>
<protein>
    <recommendedName>
        <fullName>NADH-ubiquinone oxidoreductase chain 4L</fullName>
        <ecNumber>7.1.1.2</ecNumber>
    </recommendedName>
    <alternativeName>
        <fullName>NADH dehydrogenase subunit 4L</fullName>
    </alternativeName>
</protein>
<feature type="chain" id="PRO_0000275012" description="NADH-ubiquinone oxidoreductase chain 4L">
    <location>
        <begin position="1"/>
        <end position="98"/>
    </location>
</feature>
<feature type="transmembrane region" description="Helical" evidence="3">
    <location>
        <begin position="1"/>
        <end position="21"/>
    </location>
</feature>
<feature type="transmembrane region" description="Helical" evidence="3">
    <location>
        <begin position="29"/>
        <end position="49"/>
    </location>
</feature>
<feature type="transmembrane region" description="Helical" evidence="3">
    <location>
        <begin position="61"/>
        <end position="81"/>
    </location>
</feature>
<feature type="sequence conflict" description="In Ref. 1; AAQ93774." evidence="4" ref="1">
    <original>P</original>
    <variation>Q</variation>
    <location>
        <position position="97"/>
    </location>
</feature>
<geneLocation type="mitochondrion"/>
<keyword id="KW-0249">Electron transport</keyword>
<keyword id="KW-0472">Membrane</keyword>
<keyword id="KW-0496">Mitochondrion</keyword>
<keyword id="KW-0999">Mitochondrion inner membrane</keyword>
<keyword id="KW-0520">NAD</keyword>
<keyword id="KW-0679">Respiratory chain</keyword>
<keyword id="KW-1278">Translocase</keyword>
<keyword id="KW-0812">Transmembrane</keyword>
<keyword id="KW-1133">Transmembrane helix</keyword>
<keyword id="KW-0813">Transport</keyword>
<keyword id="KW-0830">Ubiquinone</keyword>
<accession>Q08H76</accession>
<accession>Q679A9</accession>
<organism>
    <name type="scientific">Erignathus barbatus</name>
    <name type="common">Bearded seal</name>
    <dbReference type="NCBI Taxonomy" id="39304"/>
    <lineage>
        <taxon>Eukaryota</taxon>
        <taxon>Metazoa</taxon>
        <taxon>Chordata</taxon>
        <taxon>Craniata</taxon>
        <taxon>Vertebrata</taxon>
        <taxon>Euteleostomi</taxon>
        <taxon>Mammalia</taxon>
        <taxon>Eutheria</taxon>
        <taxon>Laurasiatheria</taxon>
        <taxon>Carnivora</taxon>
        <taxon>Caniformia</taxon>
        <taxon>Pinnipedia</taxon>
        <taxon>Phocidae</taxon>
        <taxon>Phocinae</taxon>
        <taxon>Erignathus</taxon>
    </lineage>
</organism>
<gene>
    <name type="primary">MT-ND4L</name>
    <name type="synonym">MTND4L</name>
    <name type="synonym">NADH4L</name>
    <name type="synonym">ND4L</name>
</gene>
<dbReference type="EC" id="7.1.1.2"/>
<dbReference type="EMBL" id="AY377235">
    <property type="protein sequence ID" value="AAQ93774.1"/>
    <property type="molecule type" value="Genomic_DNA"/>
</dbReference>
<dbReference type="EMBL" id="AM181027">
    <property type="protein sequence ID" value="CAJ57022.1"/>
    <property type="molecule type" value="Genomic_DNA"/>
</dbReference>
<dbReference type="RefSeq" id="YP_778833.1">
    <property type="nucleotide sequence ID" value="NC_008426.1"/>
</dbReference>
<dbReference type="SMR" id="Q08H76"/>
<dbReference type="GeneID" id="4356344"/>
<dbReference type="CTD" id="4539"/>
<dbReference type="GO" id="GO:0005743">
    <property type="term" value="C:mitochondrial inner membrane"/>
    <property type="evidence" value="ECO:0000250"/>
    <property type="project" value="UniProtKB"/>
</dbReference>
<dbReference type="GO" id="GO:0045271">
    <property type="term" value="C:respiratory chain complex I"/>
    <property type="evidence" value="ECO:0000250"/>
    <property type="project" value="UniProtKB"/>
</dbReference>
<dbReference type="GO" id="GO:0008137">
    <property type="term" value="F:NADH dehydrogenase (ubiquinone) activity"/>
    <property type="evidence" value="ECO:0000250"/>
    <property type="project" value="UniProtKB"/>
</dbReference>
<dbReference type="GO" id="GO:0042773">
    <property type="term" value="P:ATP synthesis coupled electron transport"/>
    <property type="evidence" value="ECO:0007669"/>
    <property type="project" value="InterPro"/>
</dbReference>
<dbReference type="FunFam" id="1.10.287.3510:FF:000002">
    <property type="entry name" value="NADH-ubiquinone oxidoreductase chain 4L"/>
    <property type="match status" value="1"/>
</dbReference>
<dbReference type="Gene3D" id="1.10.287.3510">
    <property type="match status" value="1"/>
</dbReference>
<dbReference type="InterPro" id="IPR001133">
    <property type="entry name" value="NADH_UbQ_OxRdtase_chain4L/K"/>
</dbReference>
<dbReference type="InterPro" id="IPR039428">
    <property type="entry name" value="NUOK/Mnh_C1-like"/>
</dbReference>
<dbReference type="PANTHER" id="PTHR11434:SF0">
    <property type="entry name" value="NADH-UBIQUINONE OXIDOREDUCTASE CHAIN 4L"/>
    <property type="match status" value="1"/>
</dbReference>
<dbReference type="PANTHER" id="PTHR11434">
    <property type="entry name" value="NADH-UBIQUINONE OXIDOREDUCTASE SUBUNIT ND4L"/>
    <property type="match status" value="1"/>
</dbReference>
<dbReference type="Pfam" id="PF00420">
    <property type="entry name" value="Oxidored_q2"/>
    <property type="match status" value="1"/>
</dbReference>
<evidence type="ECO:0000250" key="1">
    <source>
        <dbReference type="UniProtKB" id="P03901"/>
    </source>
</evidence>
<evidence type="ECO:0000250" key="2">
    <source>
        <dbReference type="UniProtKB" id="P03902"/>
    </source>
</evidence>
<evidence type="ECO:0000255" key="3"/>
<evidence type="ECO:0000305" key="4"/>
<reference key="1">
    <citation type="journal article" date="2004" name="Mol. Phylogenet. Evol.">
        <title>A phylogeny of the extant Phocidae inferred from complete mitochondrial DNA coding regions.</title>
        <authorList>
            <person name="Davis C.S."/>
            <person name="Delisle I."/>
            <person name="Stirling I."/>
            <person name="Siniff D.B."/>
            <person name="Strobeck C."/>
        </authorList>
    </citation>
    <scope>NUCLEOTIDE SEQUENCE [GENOMIC DNA]</scope>
</reference>
<reference key="2">
    <citation type="journal article" date="2006" name="Mol. Phylogenet. Evol.">
        <title>Pinniped phylogeny and a new hypothesis for their origin and dispersal.</title>
        <authorList>
            <person name="Arnason U."/>
            <person name="Gullberg A."/>
            <person name="Janke A."/>
            <person name="Kullberg M."/>
            <person name="Lehman N."/>
            <person name="Petrov E.A."/>
            <person name="Vainola R."/>
        </authorList>
    </citation>
    <scope>NUCLEOTIDE SEQUENCE [GENOMIC DNA]</scope>
</reference>
<name>NU4LM_ERIBA</name>
<sequence>MSMVYANIFLAFIMSLMGLLMYRSHLMSSLLCLEGMMLSLFVMMTVTILNNHFTLASMTPIILLVFAACEAALGLSLLVMVSNTYGTDYVQNLNLLPC</sequence>
<comment type="function">
    <text evidence="1">Core subunit of the mitochondrial membrane respiratory chain NADH dehydrogenase (Complex I) which catalyzes electron transfer from NADH through the respiratory chain, using ubiquinone as an electron acceptor. Part of the enzyme membrane arm which is embedded in the lipid bilayer and involved in proton translocation.</text>
</comment>
<comment type="catalytic activity">
    <reaction evidence="1">
        <text>a ubiquinone + NADH + 5 H(+)(in) = a ubiquinol + NAD(+) + 4 H(+)(out)</text>
        <dbReference type="Rhea" id="RHEA:29091"/>
        <dbReference type="Rhea" id="RHEA-COMP:9565"/>
        <dbReference type="Rhea" id="RHEA-COMP:9566"/>
        <dbReference type="ChEBI" id="CHEBI:15378"/>
        <dbReference type="ChEBI" id="CHEBI:16389"/>
        <dbReference type="ChEBI" id="CHEBI:17976"/>
        <dbReference type="ChEBI" id="CHEBI:57540"/>
        <dbReference type="ChEBI" id="CHEBI:57945"/>
        <dbReference type="EC" id="7.1.1.2"/>
    </reaction>
    <physiologicalReaction direction="left-to-right" evidence="1">
        <dbReference type="Rhea" id="RHEA:29092"/>
    </physiologicalReaction>
</comment>
<comment type="subunit">
    <text evidence="2">Core subunit of respiratory chain NADH dehydrogenase (Complex I) which is composed of 45 different subunits.</text>
</comment>
<comment type="subcellular location">
    <subcellularLocation>
        <location evidence="2">Mitochondrion inner membrane</location>
        <topology evidence="3">Multi-pass membrane protein</topology>
    </subcellularLocation>
</comment>
<comment type="similarity">
    <text evidence="4">Belongs to the complex I subunit 4L family.</text>
</comment>